<gene>
    <name evidence="1" type="primary">rimM</name>
    <name type="ordered locus">Ccur92_12500</name>
    <name type="ORF">CCV52592_0678</name>
</gene>
<protein>
    <recommendedName>
        <fullName evidence="1">Ribosome maturation factor RimM</fullName>
    </recommendedName>
</protein>
<evidence type="ECO:0000255" key="1">
    <source>
        <dbReference type="HAMAP-Rule" id="MF_00014"/>
    </source>
</evidence>
<reference key="1">
    <citation type="submission" date="2007-07" db="EMBL/GenBank/DDBJ databases">
        <title>Genome sequence of Campylobacter curvus 525.92 isolated from human feces.</title>
        <authorList>
            <person name="Fouts D.E."/>
            <person name="Mongodin E.F."/>
            <person name="Puiu D."/>
            <person name="Sebastian Y."/>
            <person name="Miller W.G."/>
            <person name="Mandrell R.E."/>
            <person name="Lastovica A.J."/>
            <person name="Nelson K.E."/>
        </authorList>
    </citation>
    <scope>NUCLEOTIDE SEQUENCE [LARGE SCALE GENOMIC DNA]</scope>
    <source>
        <strain>525.92</strain>
    </source>
</reference>
<keyword id="KW-0143">Chaperone</keyword>
<keyword id="KW-0963">Cytoplasm</keyword>
<keyword id="KW-1185">Reference proteome</keyword>
<keyword id="KW-0690">Ribosome biogenesis</keyword>
<keyword id="KW-0698">rRNA processing</keyword>
<sequence>MNSEFVEVAIIGRCVGLKGCVKLHNKGDFPEQFKKNAVFFDKDGNEFIIKSYDVSKETALFEGYEDIDLAKSLVNKILYTTKELTRKNCKLKEGEFFYFDVLGLNIVENGEILGVVKDIEDNLNNALLYVKTSDDLVSIGFAKNFYVPYIDRFVISVSLENKEILTKDAKSILENS</sequence>
<proteinExistence type="inferred from homology"/>
<accession>A7GZB2</accession>
<comment type="function">
    <text evidence="1">An accessory protein needed during the final step in the assembly of 30S ribosomal subunit, possibly for assembly of the head region. Essential for efficient processing of 16S rRNA. May be needed both before and after RbfA during the maturation of 16S rRNA. It has affinity for free ribosomal 30S subunits but not for 70S ribosomes.</text>
</comment>
<comment type="subunit">
    <text evidence="1">Binds ribosomal protein uS19.</text>
</comment>
<comment type="subcellular location">
    <subcellularLocation>
        <location evidence="1">Cytoplasm</location>
    </subcellularLocation>
</comment>
<comment type="domain">
    <text evidence="1">The PRC barrel domain binds ribosomal protein uS19.</text>
</comment>
<comment type="similarity">
    <text evidence="1">Belongs to the RimM family.</text>
</comment>
<dbReference type="EMBL" id="CP000767">
    <property type="protein sequence ID" value="EAU00410.1"/>
    <property type="molecule type" value="Genomic_DNA"/>
</dbReference>
<dbReference type="RefSeq" id="WP_011992479.1">
    <property type="nucleotide sequence ID" value="NC_009715.2"/>
</dbReference>
<dbReference type="SMR" id="A7GZB2"/>
<dbReference type="STRING" id="360105.CCV52592_0678"/>
<dbReference type="KEGG" id="ccv:CCV52592_0678"/>
<dbReference type="HOGENOM" id="CLU_077636_2_0_7"/>
<dbReference type="OrthoDB" id="9810331at2"/>
<dbReference type="Proteomes" id="UP000006380">
    <property type="component" value="Chromosome"/>
</dbReference>
<dbReference type="GO" id="GO:0005737">
    <property type="term" value="C:cytoplasm"/>
    <property type="evidence" value="ECO:0007669"/>
    <property type="project" value="UniProtKB-SubCell"/>
</dbReference>
<dbReference type="GO" id="GO:0005840">
    <property type="term" value="C:ribosome"/>
    <property type="evidence" value="ECO:0007669"/>
    <property type="project" value="InterPro"/>
</dbReference>
<dbReference type="GO" id="GO:0043022">
    <property type="term" value="F:ribosome binding"/>
    <property type="evidence" value="ECO:0007669"/>
    <property type="project" value="InterPro"/>
</dbReference>
<dbReference type="GO" id="GO:0042274">
    <property type="term" value="P:ribosomal small subunit biogenesis"/>
    <property type="evidence" value="ECO:0007669"/>
    <property type="project" value="UniProtKB-UniRule"/>
</dbReference>
<dbReference type="GO" id="GO:0006364">
    <property type="term" value="P:rRNA processing"/>
    <property type="evidence" value="ECO:0007669"/>
    <property type="project" value="UniProtKB-UniRule"/>
</dbReference>
<dbReference type="Gene3D" id="2.30.30.240">
    <property type="entry name" value="PRC-barrel domain"/>
    <property type="match status" value="1"/>
</dbReference>
<dbReference type="Gene3D" id="2.40.30.60">
    <property type="entry name" value="RimM"/>
    <property type="match status" value="1"/>
</dbReference>
<dbReference type="HAMAP" id="MF_00014">
    <property type="entry name" value="Ribosome_mat_RimM"/>
    <property type="match status" value="1"/>
</dbReference>
<dbReference type="InterPro" id="IPR011033">
    <property type="entry name" value="PRC_barrel-like_sf"/>
</dbReference>
<dbReference type="InterPro" id="IPR056792">
    <property type="entry name" value="PRC_RimM"/>
</dbReference>
<dbReference type="InterPro" id="IPR011961">
    <property type="entry name" value="RimM"/>
</dbReference>
<dbReference type="InterPro" id="IPR002676">
    <property type="entry name" value="RimM_N"/>
</dbReference>
<dbReference type="InterPro" id="IPR036976">
    <property type="entry name" value="RimM_N_sf"/>
</dbReference>
<dbReference type="InterPro" id="IPR009000">
    <property type="entry name" value="Transl_B-barrel_sf"/>
</dbReference>
<dbReference type="NCBIfam" id="TIGR02273">
    <property type="entry name" value="16S_RimM"/>
    <property type="match status" value="1"/>
</dbReference>
<dbReference type="PANTHER" id="PTHR33692">
    <property type="entry name" value="RIBOSOME MATURATION FACTOR RIMM"/>
    <property type="match status" value="1"/>
</dbReference>
<dbReference type="PANTHER" id="PTHR33692:SF1">
    <property type="entry name" value="RIBOSOME MATURATION FACTOR RIMM"/>
    <property type="match status" value="1"/>
</dbReference>
<dbReference type="Pfam" id="PF24986">
    <property type="entry name" value="PRC_RimM"/>
    <property type="match status" value="1"/>
</dbReference>
<dbReference type="Pfam" id="PF01782">
    <property type="entry name" value="RimM"/>
    <property type="match status" value="1"/>
</dbReference>
<dbReference type="SUPFAM" id="SSF50346">
    <property type="entry name" value="PRC-barrel domain"/>
    <property type="match status" value="1"/>
</dbReference>
<dbReference type="SUPFAM" id="SSF50447">
    <property type="entry name" value="Translation proteins"/>
    <property type="match status" value="1"/>
</dbReference>
<feature type="chain" id="PRO_0000321718" description="Ribosome maturation factor RimM">
    <location>
        <begin position="1"/>
        <end position="176"/>
    </location>
</feature>
<feature type="domain" description="PRC barrel" evidence="1">
    <location>
        <begin position="93"/>
        <end position="172"/>
    </location>
</feature>
<organism>
    <name type="scientific">Campylobacter curvus (strain 525.92)</name>
    <dbReference type="NCBI Taxonomy" id="360105"/>
    <lineage>
        <taxon>Bacteria</taxon>
        <taxon>Pseudomonadati</taxon>
        <taxon>Campylobacterota</taxon>
        <taxon>Epsilonproteobacteria</taxon>
        <taxon>Campylobacterales</taxon>
        <taxon>Campylobacteraceae</taxon>
        <taxon>Campylobacter</taxon>
    </lineage>
</organism>
<name>RIMM_CAMC5</name>